<sequence>MEKFITLKDTVVPLDAENVDTDQIIPARFLKATDKEGFGENLFRDWRFDKNGDPIEDFVLNQDKYSGSILLAGNNFGCGSSREHAAWAIKAYGFKAVVSSYFADIFKGNALNNGLLPVQVCPEFLTKLFVAIEKDQNEKISIDLEAQKIKIESSGESESFDIDSYKKTCLINGYDDIDFLTSKLEAIKKFEQKRRGKENVPQETI</sequence>
<protein>
    <recommendedName>
        <fullName evidence="1">3-isopropylmalate dehydratase small subunit</fullName>
        <ecNumber evidence="1">4.2.1.33</ecNumber>
    </recommendedName>
    <alternativeName>
        <fullName evidence="1">Alpha-IPM isomerase</fullName>
        <shortName evidence="1">IPMI</shortName>
    </alternativeName>
    <alternativeName>
        <fullName evidence="1">Isopropylmalate isomerase</fullName>
    </alternativeName>
</protein>
<accession>A0M367</accession>
<organism>
    <name type="scientific">Christiangramia forsetii (strain DSM 17595 / CGMCC 1.15422 / KT0803)</name>
    <name type="common">Gramella forsetii</name>
    <dbReference type="NCBI Taxonomy" id="411154"/>
    <lineage>
        <taxon>Bacteria</taxon>
        <taxon>Pseudomonadati</taxon>
        <taxon>Bacteroidota</taxon>
        <taxon>Flavobacteriia</taxon>
        <taxon>Flavobacteriales</taxon>
        <taxon>Flavobacteriaceae</taxon>
        <taxon>Christiangramia</taxon>
    </lineage>
</organism>
<gene>
    <name evidence="1" type="primary">leuD</name>
    <name type="ordered locus">GFO_2097</name>
</gene>
<evidence type="ECO:0000255" key="1">
    <source>
        <dbReference type="HAMAP-Rule" id="MF_01031"/>
    </source>
</evidence>
<name>LEUD_CHRFK</name>
<comment type="function">
    <text evidence="1">Catalyzes the isomerization between 2-isopropylmalate and 3-isopropylmalate, via the formation of 2-isopropylmaleate.</text>
</comment>
<comment type="catalytic activity">
    <reaction evidence="1">
        <text>(2R,3S)-3-isopropylmalate = (2S)-2-isopropylmalate</text>
        <dbReference type="Rhea" id="RHEA:32287"/>
        <dbReference type="ChEBI" id="CHEBI:1178"/>
        <dbReference type="ChEBI" id="CHEBI:35121"/>
        <dbReference type="EC" id="4.2.1.33"/>
    </reaction>
</comment>
<comment type="pathway">
    <text evidence="1">Amino-acid biosynthesis; L-leucine biosynthesis; L-leucine from 3-methyl-2-oxobutanoate: step 2/4.</text>
</comment>
<comment type="subunit">
    <text evidence="1">Heterodimer of LeuC and LeuD.</text>
</comment>
<comment type="similarity">
    <text evidence="1">Belongs to the LeuD family. LeuD type 1 subfamily.</text>
</comment>
<keyword id="KW-0028">Amino-acid biosynthesis</keyword>
<keyword id="KW-0100">Branched-chain amino acid biosynthesis</keyword>
<keyword id="KW-0432">Leucine biosynthesis</keyword>
<keyword id="KW-0456">Lyase</keyword>
<feature type="chain" id="PRO_1000063770" description="3-isopropylmalate dehydratase small subunit">
    <location>
        <begin position="1"/>
        <end position="205"/>
    </location>
</feature>
<reference key="1">
    <citation type="journal article" date="2006" name="Environ. Microbiol.">
        <title>Whole genome analysis of the marine Bacteroidetes'Gramella forsetii' reveals adaptations to degradation of polymeric organic matter.</title>
        <authorList>
            <person name="Bauer M."/>
            <person name="Kube M."/>
            <person name="Teeling H."/>
            <person name="Richter M."/>
            <person name="Lombardot T."/>
            <person name="Allers E."/>
            <person name="Wuerdemann C.A."/>
            <person name="Quast C."/>
            <person name="Kuhl H."/>
            <person name="Knaust F."/>
            <person name="Woebken D."/>
            <person name="Bischof K."/>
            <person name="Mussmann M."/>
            <person name="Choudhuri J.V."/>
            <person name="Meyer F."/>
            <person name="Reinhardt R."/>
            <person name="Amann R.I."/>
            <person name="Gloeckner F.O."/>
        </authorList>
    </citation>
    <scope>NUCLEOTIDE SEQUENCE [LARGE SCALE GENOMIC DNA]</scope>
    <source>
        <strain>DSM 17595 / CGMCC 1.15422 / KT0803</strain>
    </source>
</reference>
<proteinExistence type="inferred from homology"/>
<dbReference type="EC" id="4.2.1.33" evidence="1"/>
<dbReference type="EMBL" id="CU207366">
    <property type="protein sequence ID" value="CAL67062.1"/>
    <property type="molecule type" value="Genomic_DNA"/>
</dbReference>
<dbReference type="RefSeq" id="WP_011709965.1">
    <property type="nucleotide sequence ID" value="NC_008571.1"/>
</dbReference>
<dbReference type="SMR" id="A0M367"/>
<dbReference type="STRING" id="411154.GFO_2097"/>
<dbReference type="KEGG" id="gfo:GFO_2097"/>
<dbReference type="eggNOG" id="COG0066">
    <property type="taxonomic scope" value="Bacteria"/>
</dbReference>
<dbReference type="HOGENOM" id="CLU_081378_0_3_10"/>
<dbReference type="OrthoDB" id="9777465at2"/>
<dbReference type="UniPathway" id="UPA00048">
    <property type="reaction ID" value="UER00071"/>
</dbReference>
<dbReference type="Proteomes" id="UP000000755">
    <property type="component" value="Chromosome"/>
</dbReference>
<dbReference type="GO" id="GO:0009316">
    <property type="term" value="C:3-isopropylmalate dehydratase complex"/>
    <property type="evidence" value="ECO:0007669"/>
    <property type="project" value="InterPro"/>
</dbReference>
<dbReference type="GO" id="GO:0003861">
    <property type="term" value="F:3-isopropylmalate dehydratase activity"/>
    <property type="evidence" value="ECO:0007669"/>
    <property type="project" value="UniProtKB-UniRule"/>
</dbReference>
<dbReference type="GO" id="GO:0009098">
    <property type="term" value="P:L-leucine biosynthetic process"/>
    <property type="evidence" value="ECO:0007669"/>
    <property type="project" value="UniProtKB-UniRule"/>
</dbReference>
<dbReference type="CDD" id="cd01577">
    <property type="entry name" value="IPMI_Swivel"/>
    <property type="match status" value="1"/>
</dbReference>
<dbReference type="FunFam" id="3.20.19.10:FF:000003">
    <property type="entry name" value="3-isopropylmalate dehydratase small subunit"/>
    <property type="match status" value="1"/>
</dbReference>
<dbReference type="Gene3D" id="3.20.19.10">
    <property type="entry name" value="Aconitase, domain 4"/>
    <property type="match status" value="1"/>
</dbReference>
<dbReference type="HAMAP" id="MF_01031">
    <property type="entry name" value="LeuD_type1"/>
    <property type="match status" value="1"/>
</dbReference>
<dbReference type="InterPro" id="IPR004431">
    <property type="entry name" value="3-IsopropMal_deHydase_ssu"/>
</dbReference>
<dbReference type="InterPro" id="IPR015928">
    <property type="entry name" value="Aconitase/3IPM_dehydase_swvl"/>
</dbReference>
<dbReference type="InterPro" id="IPR000573">
    <property type="entry name" value="AconitaseA/IPMdHydase_ssu_swvl"/>
</dbReference>
<dbReference type="InterPro" id="IPR033940">
    <property type="entry name" value="IPMI_Swivel"/>
</dbReference>
<dbReference type="InterPro" id="IPR050075">
    <property type="entry name" value="LeuD"/>
</dbReference>
<dbReference type="NCBIfam" id="TIGR00171">
    <property type="entry name" value="leuD"/>
    <property type="match status" value="1"/>
</dbReference>
<dbReference type="NCBIfam" id="NF002458">
    <property type="entry name" value="PRK01641.1"/>
    <property type="match status" value="1"/>
</dbReference>
<dbReference type="PANTHER" id="PTHR43345:SF5">
    <property type="entry name" value="3-ISOPROPYLMALATE DEHYDRATASE SMALL SUBUNIT"/>
    <property type="match status" value="1"/>
</dbReference>
<dbReference type="PANTHER" id="PTHR43345">
    <property type="entry name" value="3-ISOPROPYLMALATE DEHYDRATASE SMALL SUBUNIT 2-RELATED-RELATED"/>
    <property type="match status" value="1"/>
</dbReference>
<dbReference type="Pfam" id="PF00694">
    <property type="entry name" value="Aconitase_C"/>
    <property type="match status" value="1"/>
</dbReference>
<dbReference type="SUPFAM" id="SSF52016">
    <property type="entry name" value="LeuD/IlvD-like"/>
    <property type="match status" value="1"/>
</dbReference>